<sequence length="367" mass="39471">MISSLHRPTLAKVDLSAISENIEQVVSHIPKQVQTFAVVKANAYGHGAVEVAKHVSKQVDGFCVSNLDEALELRQAGIEQPILILGVVLPDGVPLAIQENISLTVASLEWLTLAQKQGLDLTGLTCHIKVDSGMGRIGVRNLKDADNLIAGLKALGADVEGIFTHFATADEADDSKFKRQLSFFTDLVDNLTDRPRLVHASNSATSIWHAATVFNTVRLGVVIYGLNPSGSVLELPYNIQPALSLETALIHVKTLPAGQDVGYGATYTTTDEEVIGTLPIGYADGWTRDLQGFHVIVDGQLCPIVGRVSMDQITVRLPKVYPLGTPVTLMGENGGVSITATEVAEKRGTINYEVLCLLSDRVPRSYD</sequence>
<proteinExistence type="inferred from homology"/>
<gene>
    <name type="primary">alr</name>
    <name type="ordered locus">stu1726</name>
</gene>
<accession>Q5M2S7</accession>
<name>ALR_STRT2</name>
<reference key="1">
    <citation type="journal article" date="2004" name="Nat. Biotechnol.">
        <title>Complete sequence and comparative genome analysis of the dairy bacterium Streptococcus thermophilus.</title>
        <authorList>
            <person name="Bolotin A."/>
            <person name="Quinquis B."/>
            <person name="Renault P."/>
            <person name="Sorokin A."/>
            <person name="Ehrlich S.D."/>
            <person name="Kulakauskas S."/>
            <person name="Lapidus A."/>
            <person name="Goltsman E."/>
            <person name="Mazur M."/>
            <person name="Pusch G.D."/>
            <person name="Fonstein M."/>
            <person name="Overbeek R."/>
            <person name="Kyprides N."/>
            <person name="Purnelle B."/>
            <person name="Prozzi D."/>
            <person name="Ngui K."/>
            <person name="Masuy D."/>
            <person name="Hancy F."/>
            <person name="Burteau S."/>
            <person name="Boutry M."/>
            <person name="Delcour J."/>
            <person name="Goffeau A."/>
            <person name="Hols P."/>
        </authorList>
    </citation>
    <scope>NUCLEOTIDE SEQUENCE [LARGE SCALE GENOMIC DNA]</scope>
    <source>
        <strain>ATCC BAA-250 / LMG 18311</strain>
    </source>
</reference>
<comment type="function">
    <text evidence="1">Catalyzes the interconversion of L-alanine and D-alanine. May also act on other amino acids.</text>
</comment>
<comment type="catalytic activity">
    <reaction evidence="1">
        <text>L-alanine = D-alanine</text>
        <dbReference type="Rhea" id="RHEA:20249"/>
        <dbReference type="ChEBI" id="CHEBI:57416"/>
        <dbReference type="ChEBI" id="CHEBI:57972"/>
        <dbReference type="EC" id="5.1.1.1"/>
    </reaction>
</comment>
<comment type="cofactor">
    <cofactor evidence="1">
        <name>pyridoxal 5'-phosphate</name>
        <dbReference type="ChEBI" id="CHEBI:597326"/>
    </cofactor>
</comment>
<comment type="pathway">
    <text evidence="1">Amino-acid biosynthesis; D-alanine biosynthesis; D-alanine from L-alanine: step 1/1.</text>
</comment>
<comment type="similarity">
    <text evidence="1">Belongs to the alanine racemase family.</text>
</comment>
<evidence type="ECO:0000255" key="1">
    <source>
        <dbReference type="HAMAP-Rule" id="MF_01201"/>
    </source>
</evidence>
<feature type="chain" id="PRO_1000066055" description="Alanine racemase">
    <location>
        <begin position="1"/>
        <end position="367"/>
    </location>
</feature>
<feature type="active site" description="Proton acceptor; specific for D-alanine" evidence="1">
    <location>
        <position position="40"/>
    </location>
</feature>
<feature type="active site" description="Proton acceptor; specific for L-alanine" evidence="1">
    <location>
        <position position="263"/>
    </location>
</feature>
<feature type="binding site" evidence="1">
    <location>
        <position position="136"/>
    </location>
    <ligand>
        <name>substrate</name>
    </ligand>
</feature>
<feature type="binding site" evidence="1">
    <location>
        <position position="310"/>
    </location>
    <ligand>
        <name>substrate</name>
    </ligand>
</feature>
<feature type="modified residue" description="N6-(pyridoxal phosphate)lysine" evidence="1">
    <location>
        <position position="40"/>
    </location>
</feature>
<keyword id="KW-0413">Isomerase</keyword>
<keyword id="KW-0663">Pyridoxal phosphate</keyword>
<keyword id="KW-1185">Reference proteome</keyword>
<protein>
    <recommendedName>
        <fullName evidence="1">Alanine racemase</fullName>
        <ecNumber evidence="1">5.1.1.1</ecNumber>
    </recommendedName>
</protein>
<organism>
    <name type="scientific">Streptococcus thermophilus (strain ATCC BAA-250 / LMG 18311)</name>
    <dbReference type="NCBI Taxonomy" id="264199"/>
    <lineage>
        <taxon>Bacteria</taxon>
        <taxon>Bacillati</taxon>
        <taxon>Bacillota</taxon>
        <taxon>Bacilli</taxon>
        <taxon>Lactobacillales</taxon>
        <taxon>Streptococcaceae</taxon>
        <taxon>Streptococcus</taxon>
    </lineage>
</organism>
<dbReference type="EC" id="5.1.1.1" evidence="1"/>
<dbReference type="EMBL" id="CP000023">
    <property type="protein sequence ID" value="AAV61325.1"/>
    <property type="molecule type" value="Genomic_DNA"/>
</dbReference>
<dbReference type="RefSeq" id="WP_011226530.1">
    <property type="nucleotide sequence ID" value="NC_006448.1"/>
</dbReference>
<dbReference type="SMR" id="Q5M2S7"/>
<dbReference type="STRING" id="264199.stu1726"/>
<dbReference type="GeneID" id="66899463"/>
<dbReference type="KEGG" id="stl:stu1726"/>
<dbReference type="PATRIC" id="fig|264199.4.peg.1701"/>
<dbReference type="eggNOG" id="COG0787">
    <property type="taxonomic scope" value="Bacteria"/>
</dbReference>
<dbReference type="HOGENOM" id="CLU_028393_2_1_9"/>
<dbReference type="UniPathway" id="UPA00042">
    <property type="reaction ID" value="UER00497"/>
</dbReference>
<dbReference type="Proteomes" id="UP000001170">
    <property type="component" value="Chromosome"/>
</dbReference>
<dbReference type="GO" id="GO:0005829">
    <property type="term" value="C:cytosol"/>
    <property type="evidence" value="ECO:0007669"/>
    <property type="project" value="TreeGrafter"/>
</dbReference>
<dbReference type="GO" id="GO:0008784">
    <property type="term" value="F:alanine racemase activity"/>
    <property type="evidence" value="ECO:0007669"/>
    <property type="project" value="UniProtKB-UniRule"/>
</dbReference>
<dbReference type="GO" id="GO:0030170">
    <property type="term" value="F:pyridoxal phosphate binding"/>
    <property type="evidence" value="ECO:0007669"/>
    <property type="project" value="UniProtKB-UniRule"/>
</dbReference>
<dbReference type="GO" id="GO:0030632">
    <property type="term" value="P:D-alanine biosynthetic process"/>
    <property type="evidence" value="ECO:0007669"/>
    <property type="project" value="UniProtKB-UniRule"/>
</dbReference>
<dbReference type="GO" id="GO:0009252">
    <property type="term" value="P:peptidoglycan biosynthetic process"/>
    <property type="evidence" value="ECO:0007669"/>
    <property type="project" value="TreeGrafter"/>
</dbReference>
<dbReference type="CDD" id="cd00430">
    <property type="entry name" value="PLPDE_III_AR"/>
    <property type="match status" value="1"/>
</dbReference>
<dbReference type="FunFam" id="2.40.37.10:FF:000006">
    <property type="entry name" value="Alanine racemase"/>
    <property type="match status" value="1"/>
</dbReference>
<dbReference type="FunFam" id="3.20.20.10:FF:000002">
    <property type="entry name" value="Alanine racemase"/>
    <property type="match status" value="1"/>
</dbReference>
<dbReference type="Gene3D" id="3.20.20.10">
    <property type="entry name" value="Alanine racemase"/>
    <property type="match status" value="1"/>
</dbReference>
<dbReference type="Gene3D" id="2.40.37.10">
    <property type="entry name" value="Lyase, Ornithine Decarboxylase, Chain A, domain 1"/>
    <property type="match status" value="1"/>
</dbReference>
<dbReference type="HAMAP" id="MF_01201">
    <property type="entry name" value="Ala_racemase"/>
    <property type="match status" value="1"/>
</dbReference>
<dbReference type="InterPro" id="IPR000821">
    <property type="entry name" value="Ala_racemase"/>
</dbReference>
<dbReference type="InterPro" id="IPR009006">
    <property type="entry name" value="Ala_racemase/Decarboxylase_C"/>
</dbReference>
<dbReference type="InterPro" id="IPR011079">
    <property type="entry name" value="Ala_racemase_C"/>
</dbReference>
<dbReference type="InterPro" id="IPR001608">
    <property type="entry name" value="Ala_racemase_N"/>
</dbReference>
<dbReference type="InterPro" id="IPR020622">
    <property type="entry name" value="Ala_racemase_pyridoxalP-BS"/>
</dbReference>
<dbReference type="InterPro" id="IPR029066">
    <property type="entry name" value="PLP-binding_barrel"/>
</dbReference>
<dbReference type="NCBIfam" id="TIGR00492">
    <property type="entry name" value="alr"/>
    <property type="match status" value="1"/>
</dbReference>
<dbReference type="PANTHER" id="PTHR30511">
    <property type="entry name" value="ALANINE RACEMASE"/>
    <property type="match status" value="1"/>
</dbReference>
<dbReference type="PANTHER" id="PTHR30511:SF0">
    <property type="entry name" value="ALANINE RACEMASE, CATABOLIC-RELATED"/>
    <property type="match status" value="1"/>
</dbReference>
<dbReference type="Pfam" id="PF00842">
    <property type="entry name" value="Ala_racemase_C"/>
    <property type="match status" value="1"/>
</dbReference>
<dbReference type="Pfam" id="PF01168">
    <property type="entry name" value="Ala_racemase_N"/>
    <property type="match status" value="1"/>
</dbReference>
<dbReference type="PRINTS" id="PR00992">
    <property type="entry name" value="ALARACEMASE"/>
</dbReference>
<dbReference type="SMART" id="SM01005">
    <property type="entry name" value="Ala_racemase_C"/>
    <property type="match status" value="1"/>
</dbReference>
<dbReference type="SUPFAM" id="SSF50621">
    <property type="entry name" value="Alanine racemase C-terminal domain-like"/>
    <property type="match status" value="1"/>
</dbReference>
<dbReference type="SUPFAM" id="SSF51419">
    <property type="entry name" value="PLP-binding barrel"/>
    <property type="match status" value="1"/>
</dbReference>
<dbReference type="PROSITE" id="PS00395">
    <property type="entry name" value="ALANINE_RACEMASE"/>
    <property type="match status" value="1"/>
</dbReference>